<accession>Q0A6K1</accession>
<proteinExistence type="inferred from homology"/>
<comment type="function">
    <text evidence="2">Peptidoglycan polymerase that is essential for cell division.</text>
</comment>
<comment type="catalytic activity">
    <reaction evidence="2">
        <text>[GlcNAc-(1-&gt;4)-Mur2Ac(oyl-L-Ala-gamma-D-Glu-L-Lys-D-Ala-D-Ala)](n)-di-trans,octa-cis-undecaprenyl diphosphate + beta-D-GlcNAc-(1-&gt;4)-Mur2Ac(oyl-L-Ala-gamma-D-Glu-L-Lys-D-Ala-D-Ala)-di-trans,octa-cis-undecaprenyl diphosphate = [GlcNAc-(1-&gt;4)-Mur2Ac(oyl-L-Ala-gamma-D-Glu-L-Lys-D-Ala-D-Ala)](n+1)-di-trans,octa-cis-undecaprenyl diphosphate + di-trans,octa-cis-undecaprenyl diphosphate + H(+)</text>
        <dbReference type="Rhea" id="RHEA:23708"/>
        <dbReference type="Rhea" id="RHEA-COMP:9602"/>
        <dbReference type="Rhea" id="RHEA-COMP:9603"/>
        <dbReference type="ChEBI" id="CHEBI:15378"/>
        <dbReference type="ChEBI" id="CHEBI:58405"/>
        <dbReference type="ChEBI" id="CHEBI:60033"/>
        <dbReference type="ChEBI" id="CHEBI:78435"/>
        <dbReference type="EC" id="2.4.99.28"/>
    </reaction>
</comment>
<comment type="pathway">
    <text evidence="2">Cell wall biogenesis; peptidoglycan biosynthesis.</text>
</comment>
<comment type="subcellular location">
    <subcellularLocation>
        <location evidence="2">Cell inner membrane</location>
        <topology evidence="2">Multi-pass membrane protein</topology>
    </subcellularLocation>
    <text evidence="2">Localizes to the division septum.</text>
</comment>
<comment type="similarity">
    <text evidence="2">Belongs to the SEDS family. FtsW subfamily.</text>
</comment>
<name>FTSW_ALKEH</name>
<sequence>MAEVLRWLRLDLGQSGGLAWERLDWRLALTVLALAGLGLVMVGSASVSIAEGATGDPLHYLYRQAVFLAVALMAAVACLHLSLDQFYRGGPVLLVLGFFLLLVVLIPGVGREVNGATRWIPLGLINLQVAEVARVCFIIYLAGYCVRRHAELPNTSSAFAVPLAVFSLAAVLLLAQPDFGTALVLMATALGLLFLAGASLWRIGVLGLLLAGAAWLLIVGSPYRWQRLTTFTDPWADPFNAGFQLTQSLIAIGRGEWFGVGLGASVQKLFYLPEAHTDFLFAVLAEELGLLGVVVVVALFTYLAWRGMQIGLASLRADRPFGAYLAWGLTISIGLQAFINMAVTMGLLPTKGLTLPLMSYGGSSLIMTGIALALLLRVDYEARLAAQQPRPRKRPSGRVRP</sequence>
<evidence type="ECO:0000255" key="1"/>
<evidence type="ECO:0000255" key="2">
    <source>
        <dbReference type="HAMAP-Rule" id="MF_00913"/>
    </source>
</evidence>
<organism>
    <name type="scientific">Alkalilimnicola ehrlichii (strain ATCC BAA-1101 / DSM 17681 / MLHE-1)</name>
    <dbReference type="NCBI Taxonomy" id="187272"/>
    <lineage>
        <taxon>Bacteria</taxon>
        <taxon>Pseudomonadati</taxon>
        <taxon>Pseudomonadota</taxon>
        <taxon>Gammaproteobacteria</taxon>
        <taxon>Chromatiales</taxon>
        <taxon>Ectothiorhodospiraceae</taxon>
        <taxon>Alkalilimnicola</taxon>
    </lineage>
</organism>
<dbReference type="EC" id="2.4.99.28" evidence="2"/>
<dbReference type="EMBL" id="CP000453">
    <property type="protein sequence ID" value="ABI57536.1"/>
    <property type="molecule type" value="Genomic_DNA"/>
</dbReference>
<dbReference type="RefSeq" id="WP_011629930.1">
    <property type="nucleotide sequence ID" value="NC_008340.1"/>
</dbReference>
<dbReference type="SMR" id="Q0A6K1"/>
<dbReference type="KEGG" id="aeh:Mlg_2194"/>
<dbReference type="eggNOG" id="COG0772">
    <property type="taxonomic scope" value="Bacteria"/>
</dbReference>
<dbReference type="HOGENOM" id="CLU_029243_1_1_6"/>
<dbReference type="OrthoDB" id="9768187at2"/>
<dbReference type="UniPathway" id="UPA00219"/>
<dbReference type="Proteomes" id="UP000001962">
    <property type="component" value="Chromosome"/>
</dbReference>
<dbReference type="GO" id="GO:0032153">
    <property type="term" value="C:cell division site"/>
    <property type="evidence" value="ECO:0007669"/>
    <property type="project" value="UniProtKB-UniRule"/>
</dbReference>
<dbReference type="GO" id="GO:0005886">
    <property type="term" value="C:plasma membrane"/>
    <property type="evidence" value="ECO:0007669"/>
    <property type="project" value="UniProtKB-SubCell"/>
</dbReference>
<dbReference type="GO" id="GO:0015648">
    <property type="term" value="F:lipid-linked peptidoglycan transporter activity"/>
    <property type="evidence" value="ECO:0007669"/>
    <property type="project" value="TreeGrafter"/>
</dbReference>
<dbReference type="GO" id="GO:0008955">
    <property type="term" value="F:peptidoglycan glycosyltransferase activity"/>
    <property type="evidence" value="ECO:0007669"/>
    <property type="project" value="UniProtKB-UniRule"/>
</dbReference>
<dbReference type="GO" id="GO:0071555">
    <property type="term" value="P:cell wall organization"/>
    <property type="evidence" value="ECO:0007669"/>
    <property type="project" value="UniProtKB-KW"/>
</dbReference>
<dbReference type="GO" id="GO:0043093">
    <property type="term" value="P:FtsZ-dependent cytokinesis"/>
    <property type="evidence" value="ECO:0007669"/>
    <property type="project" value="UniProtKB-UniRule"/>
</dbReference>
<dbReference type="GO" id="GO:0009252">
    <property type="term" value="P:peptidoglycan biosynthetic process"/>
    <property type="evidence" value="ECO:0007669"/>
    <property type="project" value="UniProtKB-UniRule"/>
</dbReference>
<dbReference type="GO" id="GO:0008360">
    <property type="term" value="P:regulation of cell shape"/>
    <property type="evidence" value="ECO:0007669"/>
    <property type="project" value="UniProtKB-KW"/>
</dbReference>
<dbReference type="HAMAP" id="MF_00913">
    <property type="entry name" value="PGT_FtsW_proteobact"/>
    <property type="match status" value="1"/>
</dbReference>
<dbReference type="InterPro" id="IPR018365">
    <property type="entry name" value="Cell_cycle_FtsW-rel_CS"/>
</dbReference>
<dbReference type="InterPro" id="IPR013437">
    <property type="entry name" value="FtsW"/>
</dbReference>
<dbReference type="InterPro" id="IPR001182">
    <property type="entry name" value="FtsW/RodA"/>
</dbReference>
<dbReference type="NCBIfam" id="TIGR02614">
    <property type="entry name" value="ftsW"/>
    <property type="match status" value="1"/>
</dbReference>
<dbReference type="PANTHER" id="PTHR30474">
    <property type="entry name" value="CELL CYCLE PROTEIN"/>
    <property type="match status" value="1"/>
</dbReference>
<dbReference type="PANTHER" id="PTHR30474:SF2">
    <property type="entry name" value="PEPTIDOGLYCAN GLYCOSYLTRANSFERASE FTSW-RELATED"/>
    <property type="match status" value="1"/>
</dbReference>
<dbReference type="Pfam" id="PF01098">
    <property type="entry name" value="FTSW_RODA_SPOVE"/>
    <property type="match status" value="1"/>
</dbReference>
<dbReference type="PROSITE" id="PS00428">
    <property type="entry name" value="FTSW_RODA_SPOVE"/>
    <property type="match status" value="1"/>
</dbReference>
<protein>
    <recommendedName>
        <fullName evidence="2">Probable peptidoglycan glycosyltransferase FtsW</fullName>
        <shortName evidence="2">PGT</shortName>
        <ecNumber evidence="2">2.4.99.28</ecNumber>
    </recommendedName>
    <alternativeName>
        <fullName evidence="2">Cell division protein FtsW</fullName>
    </alternativeName>
    <alternativeName>
        <fullName evidence="2">Cell wall polymerase</fullName>
    </alternativeName>
    <alternativeName>
        <fullName evidence="2">Peptidoglycan polymerase</fullName>
        <shortName evidence="2">PG polymerase</shortName>
    </alternativeName>
</protein>
<keyword id="KW-0131">Cell cycle</keyword>
<keyword id="KW-0132">Cell division</keyword>
<keyword id="KW-0997">Cell inner membrane</keyword>
<keyword id="KW-1003">Cell membrane</keyword>
<keyword id="KW-0133">Cell shape</keyword>
<keyword id="KW-0961">Cell wall biogenesis/degradation</keyword>
<keyword id="KW-0328">Glycosyltransferase</keyword>
<keyword id="KW-0472">Membrane</keyword>
<keyword id="KW-0573">Peptidoglycan synthesis</keyword>
<keyword id="KW-1185">Reference proteome</keyword>
<keyword id="KW-0808">Transferase</keyword>
<keyword id="KW-0812">Transmembrane</keyword>
<keyword id="KW-1133">Transmembrane helix</keyword>
<feature type="chain" id="PRO_0000415172" description="Probable peptidoglycan glycosyltransferase FtsW">
    <location>
        <begin position="1"/>
        <end position="401"/>
    </location>
</feature>
<feature type="topological domain" description="Cytoplasmic" evidence="1">
    <location>
        <begin position="1"/>
        <end position="26"/>
    </location>
</feature>
<feature type="transmembrane region" description="Helical" evidence="2">
    <location>
        <begin position="27"/>
        <end position="47"/>
    </location>
</feature>
<feature type="topological domain" description="Periplasmic" evidence="1">
    <location>
        <begin position="48"/>
        <end position="65"/>
    </location>
</feature>
<feature type="transmembrane region" description="Helical" evidence="2">
    <location>
        <begin position="66"/>
        <end position="86"/>
    </location>
</feature>
<feature type="topological domain" description="Cytoplasmic" evidence="1">
    <location>
        <begin position="87"/>
        <end position="88"/>
    </location>
</feature>
<feature type="transmembrane region" description="Helical" evidence="2">
    <location>
        <begin position="89"/>
        <end position="109"/>
    </location>
</feature>
<feature type="topological domain" description="Periplasmic" evidence="1">
    <location>
        <begin position="110"/>
        <end position="118"/>
    </location>
</feature>
<feature type="transmembrane region" description="Helical" evidence="2">
    <location>
        <begin position="119"/>
        <end position="139"/>
    </location>
</feature>
<feature type="topological domain" description="Cytoplasmic" evidence="1">
    <location>
        <begin position="140"/>
        <end position="154"/>
    </location>
</feature>
<feature type="transmembrane region" description="Helical" evidence="2">
    <location>
        <begin position="155"/>
        <end position="175"/>
    </location>
</feature>
<feature type="topological domain" description="Periplasmic" evidence="1">
    <location>
        <begin position="176"/>
        <end position="180"/>
    </location>
</feature>
<feature type="transmembrane region" description="Helical" evidence="2">
    <location>
        <begin position="181"/>
        <end position="201"/>
    </location>
</feature>
<feature type="topological domain" description="Cytoplasmic" evidence="1">
    <location>
        <position position="202"/>
    </location>
</feature>
<feature type="transmembrane region" description="Helical" evidence="2">
    <location>
        <begin position="203"/>
        <end position="223"/>
    </location>
</feature>
<feature type="topological domain" description="Periplasmic" evidence="1">
    <location>
        <begin position="224"/>
        <end position="278"/>
    </location>
</feature>
<feature type="transmembrane region" description="Helical" evidence="2">
    <location>
        <begin position="279"/>
        <end position="299"/>
    </location>
</feature>
<feature type="topological domain" description="Cytoplasmic" evidence="1">
    <location>
        <begin position="300"/>
        <end position="322"/>
    </location>
</feature>
<feature type="transmembrane region" description="Helical" evidence="2">
    <location>
        <begin position="323"/>
        <end position="343"/>
    </location>
</feature>
<feature type="topological domain" description="Periplasmic" evidence="1">
    <location>
        <begin position="344"/>
        <end position="354"/>
    </location>
</feature>
<feature type="transmembrane region" description="Helical" evidence="2">
    <location>
        <begin position="355"/>
        <end position="375"/>
    </location>
</feature>
<feature type="topological domain" description="Cytoplasmic" evidence="1">
    <location>
        <begin position="376"/>
        <end position="401"/>
    </location>
</feature>
<gene>
    <name evidence="2" type="primary">ftsW</name>
    <name type="ordered locus">Mlg_2194</name>
</gene>
<reference key="1">
    <citation type="submission" date="2006-08" db="EMBL/GenBank/DDBJ databases">
        <title>Complete sequence of Alkalilimnicola ehrilichei MLHE-1.</title>
        <authorList>
            <person name="Copeland A."/>
            <person name="Lucas S."/>
            <person name="Lapidus A."/>
            <person name="Barry K."/>
            <person name="Detter J.C."/>
            <person name="Glavina del Rio T."/>
            <person name="Hammon N."/>
            <person name="Israni S."/>
            <person name="Dalin E."/>
            <person name="Tice H."/>
            <person name="Pitluck S."/>
            <person name="Sims D."/>
            <person name="Brettin T."/>
            <person name="Bruce D."/>
            <person name="Han C."/>
            <person name="Tapia R."/>
            <person name="Gilna P."/>
            <person name="Schmutz J."/>
            <person name="Larimer F."/>
            <person name="Land M."/>
            <person name="Hauser L."/>
            <person name="Kyrpides N."/>
            <person name="Mikhailova N."/>
            <person name="Oremland R.S."/>
            <person name="Hoeft S.E."/>
            <person name="Switzer-Blum J."/>
            <person name="Kulp T."/>
            <person name="King G."/>
            <person name="Tabita R."/>
            <person name="Witte B."/>
            <person name="Santini J.M."/>
            <person name="Basu P."/>
            <person name="Hollibaugh J.T."/>
            <person name="Xie G."/>
            <person name="Stolz J.F."/>
            <person name="Richardson P."/>
        </authorList>
    </citation>
    <scope>NUCLEOTIDE SEQUENCE [LARGE SCALE GENOMIC DNA]</scope>
    <source>
        <strain>ATCC BAA-1101 / DSM 17681 / MLHE-1</strain>
    </source>
</reference>